<accession>P0A6P9</accession>
<accession>P08324</accession>
<accession>Q2MA53</accession>
<comment type="function">
    <text evidence="1 11 14">Catalyzes the reversible conversion of 2-phosphoglycerate (2-PG) into phosphoenolpyruvate (PEP) (PubMed:2513001, PubMed:4942326). It is essential for the degradation of carbohydrates via glycolysis.</text>
</comment>
<comment type="function">
    <text evidence="3 5 7 8 15 18">Part of the RNA degradosome, a multi-enzyme complex involved in RNA processing and messenger RNA degradation (PubMed:8610017, PubMed:9732274). Its interaction with RNase E is important for the turnover of mRNA, in particular on transcripts encoding enzymes of energy-generating metabolic routes (PubMed:14981237). Its presence in the degradosome is required for the response to excess phosphosugar (PubMed:15522087). May play a regulatory role in the degradation of specific RNAs, such as ptsG mRNA, therefore linking cellular metabolic status with post-translational gene regulation (PubMed:15522087).</text>
</comment>
<comment type="catalytic activity">
    <reaction evidence="1 11 12 14">
        <text>(2R)-2-phosphoglycerate = phosphoenolpyruvate + H2O</text>
        <dbReference type="Rhea" id="RHEA:10164"/>
        <dbReference type="ChEBI" id="CHEBI:15377"/>
        <dbReference type="ChEBI" id="CHEBI:58289"/>
        <dbReference type="ChEBI" id="CHEBI:58702"/>
        <dbReference type="EC" id="4.2.1.11"/>
    </reaction>
    <physiologicalReaction direction="left-to-right" evidence="11 12 14">
        <dbReference type="Rhea" id="RHEA:10165"/>
    </physiologicalReaction>
    <physiologicalReaction direction="right-to-left" evidence="11">
        <dbReference type="Rhea" id="RHEA:10166"/>
    </physiologicalReaction>
</comment>
<comment type="cofactor">
    <cofactor evidence="1 2 6 10 14">
        <name>Mg(2+)</name>
        <dbReference type="ChEBI" id="CHEBI:18420"/>
    </cofactor>
    <text evidence="2 6 12 14">Mg(2+) is required for catalysis and for stabilizing the dimer (PubMed:4942326). A second Mg(2+) binds during catalysis (PubMed:11676541, PubMed:16516921, PubMed:30714720).</text>
</comment>
<comment type="activity regulation">
    <text evidence="4 11 12 14">The covalent binding to the substrate (probably 2-PG) at Lys-342 causes inactivation of the enzyme, and possibly serves as a signal for the export of the protein; most substrate-bound protein is in the growth medium (PubMed:15003462). Inhibited by fluoride ion in the presence of phosphate (PubMed:4942326). Phosphorylation increases the reverse reaction (PEP as substrate) (PubMed:2513001). Binds to and is inhibited by tropolone antibiotics (PubMed:30714720).</text>
</comment>
<comment type="biophysicochemical properties">
    <kinetics>
        <KM evidence="14">100 uM for 2-phosphoglycerate</KM>
    </kinetics>
    <phDependence>
        <text evidence="14">Optimum pH is 8.1.</text>
    </phDependence>
</comment>
<comment type="pathway">
    <text evidence="1">Carbohydrate degradation; glycolysis; pyruvate from D-glyceraldehyde 3-phosphate: step 4/5.</text>
</comment>
<comment type="subunit">
    <text evidence="2 3 5 6 7 8 10 12 14 15 18">Homodimer (PubMed:11676541, PubMed:16516921, PubMed:20823555, PubMed:4942326). Homodimers that trimerize (PubMed:30714720). Component of the RNA degradosome, a multiprotein complex involved in RNA processing and mRNA degradation (PubMed:14981237, PubMed:15522087, PubMed:17242352, PubMed:18337249, PubMed:8610017, PubMed:9732274). Interacts with the C-terminal region of the endoribonuclease RNase E (PubMed:9732274).</text>
</comment>
<comment type="interaction">
    <interactant intactId="EBI-368855">
        <id>P0A6P9</id>
    </interactant>
    <interactant intactId="EBI-368855">
        <id>P0A6P9</id>
        <label>eno</label>
    </interactant>
    <organismsDiffer>false</organismsDiffer>
    <experiments>2</experiments>
</comment>
<comment type="interaction">
    <interactant intactId="EBI-368855">
        <id>P0A6P9</id>
    </interactant>
    <interactant intactId="EBI-549958">
        <id>P21513</id>
        <label>rne</label>
    </interactant>
    <organismsDiffer>false</organismsDiffer>
    <experiments>17</experiments>
</comment>
<comment type="interaction">
    <interactant intactId="EBI-368855">
        <id>P0A6P9</id>
    </interactant>
    <interactant intactId="EBI-546020">
        <id>P0AG07</id>
        <label>rpe</label>
    </interactant>
    <organismsDiffer>false</organismsDiffer>
    <experiments>3</experiments>
</comment>
<comment type="subcellular location">
    <subcellularLocation>
        <location evidence="1 23">Cytoplasm</location>
    </subcellularLocation>
    <subcellularLocation>
        <location evidence="7 8">Cytoplasm</location>
        <location evidence="7 8">Cytoskeleton</location>
    </subcellularLocation>
    <subcellularLocation>
        <location evidence="1 4">Secreted</location>
    </subcellularLocation>
    <subcellularLocation>
        <location evidence="1">Cell surface</location>
    </subcellularLocation>
    <text evidence="4 7">Fractions of enolase are present in both the cytoplasm and on the cell surface. As part of the bacterial cytoskeleton in the cytoplasm, is organized as extended coiled structures that wind around the cell, from one cell pole to the other (PubMed:17242352). When covalently bound to the substrate at Lys-342, the inactive enolase is secreted (PubMed:15003462).</text>
</comment>
<comment type="PTM">
    <text evidence="4 11">Phosphorylated on serine residue(s) (PubMed:2513001). Seven-fold more phosphate is incorporated in glucose grown cells as compared to acetate grown cells; less labeling is seen in stationary phase (PubMed:2513001). Another paper suggests this phosphorylation is actually due to poor resolution of substrate-bound enolase (PubMed:15003462).</text>
</comment>
<comment type="biotechnology">
    <text evidence="22">Inhibited by tropolone antibiotics which are a possible drug target (PubMed:30714720).</text>
</comment>
<comment type="similarity">
    <text evidence="1">Belongs to the enolase family.</text>
</comment>
<gene>
    <name evidence="1 19" type="primary">eno</name>
    <name type="ordered locus">b2779</name>
    <name type="ordered locus">JW2750</name>
</gene>
<name>ENO_ECOLI</name>
<sequence>MSKIVKIIGREIIDSRGNPTVEAEVHLEGGFVGMAAAPSGASTGSREALELRDGDKSRFLGKGVTKAVAAVNGPIAQALIGKDAKDQAGIDKIMIDLDGTENKSKFGANAILAVSLANAKAAAAAKGMPLYEHIAELNGTPGKYSMPVPMMNIINGGEHADNNVDIQEFMIQPVGAKTVKEAIRMGSEVFHHLAKVLKAKGMNTAVGDEGGYAPNLGSNAEALAVIAEAVKAAGYELGKDITLAMDCAASEFYKDGKYVLAGEGNKAFTSEEFTHFLEELTKQYPIVSIEDGLDESDWDGFAYQTKVLGDKIQLVGDDLFVTNTKILKEGIEKGIANSILIKFNQIGSLTETLAAIKMAKDAGYTAVISHRSGETEDATIADLAVGTAAGQIKTGSMSRSDRVAKYNQLIRIEEALGEKAPYNGRKEIKGQA</sequence>
<proteinExistence type="evidence at protein level"/>
<keyword id="KW-0002">3D-structure</keyword>
<keyword id="KW-0007">Acetylation</keyword>
<keyword id="KW-0963">Cytoplasm</keyword>
<keyword id="KW-0206">Cytoskeleton</keyword>
<keyword id="KW-0903">Direct protein sequencing</keyword>
<keyword id="KW-0324">Glycolysis</keyword>
<keyword id="KW-0379">Hydroxylation</keyword>
<keyword id="KW-0456">Lyase</keyword>
<keyword id="KW-0460">Magnesium</keyword>
<keyword id="KW-0479">Metal-binding</keyword>
<keyword id="KW-1185">Reference proteome</keyword>
<keyword id="KW-0964">Secreted</keyword>
<dbReference type="EC" id="4.2.1.11" evidence="1 11 14"/>
<dbReference type="EMBL" id="X82400">
    <property type="protein sequence ID" value="CAA57795.1"/>
    <property type="molecule type" value="Genomic_DNA"/>
</dbReference>
<dbReference type="EMBL" id="U29580">
    <property type="protein sequence ID" value="AAA69289.1"/>
    <property type="molecule type" value="Genomic_DNA"/>
</dbReference>
<dbReference type="EMBL" id="U00096">
    <property type="protein sequence ID" value="AAC75821.1"/>
    <property type="molecule type" value="Genomic_DNA"/>
</dbReference>
<dbReference type="EMBL" id="AP009048">
    <property type="protein sequence ID" value="BAE76853.1"/>
    <property type="molecule type" value="Genomic_DNA"/>
</dbReference>
<dbReference type="EMBL" id="M12843">
    <property type="protein sequence ID" value="AAA24486.1"/>
    <property type="molecule type" value="mRNA"/>
</dbReference>
<dbReference type="PIR" id="G65059">
    <property type="entry name" value="NOEC"/>
</dbReference>
<dbReference type="RefSeq" id="NP_417259.1">
    <property type="nucleotide sequence ID" value="NC_000913.3"/>
</dbReference>
<dbReference type="RefSeq" id="WP_000036723.1">
    <property type="nucleotide sequence ID" value="NZ_STEB01000030.1"/>
</dbReference>
<dbReference type="PDB" id="1E9I">
    <property type="method" value="X-ray"/>
    <property type="resolution" value="2.48 A"/>
    <property type="chains" value="A/B/C/D=2-432"/>
</dbReference>
<dbReference type="PDB" id="2FYM">
    <property type="method" value="X-ray"/>
    <property type="resolution" value="1.60 A"/>
    <property type="chains" value="A/C/D/F=2-432"/>
</dbReference>
<dbReference type="PDB" id="3H8A">
    <property type="method" value="X-ray"/>
    <property type="resolution" value="1.90 A"/>
    <property type="chains" value="A/B/C/D=1-432"/>
</dbReference>
<dbReference type="PDB" id="5OHG">
    <property type="method" value="X-ray"/>
    <property type="resolution" value="2.00 A"/>
    <property type="chains" value="A/B/H/I=1-432"/>
</dbReference>
<dbReference type="PDB" id="6BFY">
    <property type="method" value="X-ray"/>
    <property type="resolution" value="1.81 A"/>
    <property type="chains" value="A/B/C/D/E/F=1-432"/>
</dbReference>
<dbReference type="PDB" id="6BFZ">
    <property type="method" value="X-ray"/>
    <property type="resolution" value="2.21 A"/>
    <property type="chains" value="A/B/C/D/E/F=1-432"/>
</dbReference>
<dbReference type="PDB" id="6D3Q">
    <property type="method" value="X-ray"/>
    <property type="resolution" value="2.24 A"/>
    <property type="chains" value="A/B/C/D/E/F=1-432"/>
</dbReference>
<dbReference type="PDB" id="6NPF">
    <property type="method" value="X-ray"/>
    <property type="resolution" value="2.57 A"/>
    <property type="chains" value="A/B/C/D/E/F=1-432"/>
</dbReference>
<dbReference type="PDBsum" id="1E9I"/>
<dbReference type="PDBsum" id="2FYM"/>
<dbReference type="PDBsum" id="3H8A"/>
<dbReference type="PDBsum" id="5OHG"/>
<dbReference type="PDBsum" id="6BFY"/>
<dbReference type="PDBsum" id="6BFZ"/>
<dbReference type="PDBsum" id="6D3Q"/>
<dbReference type="PDBsum" id="6NPF"/>
<dbReference type="SMR" id="P0A6P9"/>
<dbReference type="BioGRID" id="4262297">
    <property type="interactions" value="365"/>
</dbReference>
<dbReference type="ComplexPortal" id="CPX-403">
    <property type="entry name" value="RNA degradosome"/>
</dbReference>
<dbReference type="DIP" id="DIP-31847N"/>
<dbReference type="FunCoup" id="P0A6P9">
    <property type="interactions" value="854"/>
</dbReference>
<dbReference type="IntAct" id="P0A6P9">
    <property type="interactions" value="38"/>
</dbReference>
<dbReference type="STRING" id="511145.b2779"/>
<dbReference type="CarbonylDB" id="P0A6P9"/>
<dbReference type="iPTMnet" id="P0A6P9"/>
<dbReference type="jPOST" id="P0A6P9"/>
<dbReference type="PaxDb" id="511145-b2779"/>
<dbReference type="EnsemblBacteria" id="AAC75821">
    <property type="protein sequence ID" value="AAC75821"/>
    <property type="gene ID" value="b2779"/>
</dbReference>
<dbReference type="GeneID" id="93779219"/>
<dbReference type="GeneID" id="945032"/>
<dbReference type="KEGG" id="ecj:JW2750"/>
<dbReference type="KEGG" id="eco:b2779"/>
<dbReference type="KEGG" id="ecoc:C3026_15270"/>
<dbReference type="PATRIC" id="fig|1411691.4.peg.3956"/>
<dbReference type="EchoBASE" id="EB0254"/>
<dbReference type="eggNOG" id="COG0148">
    <property type="taxonomic scope" value="Bacteria"/>
</dbReference>
<dbReference type="HOGENOM" id="CLU_031223_2_1_6"/>
<dbReference type="InParanoid" id="P0A6P9"/>
<dbReference type="OMA" id="RCMMSHR"/>
<dbReference type="OrthoDB" id="9804716at2"/>
<dbReference type="PhylomeDB" id="P0A6P9"/>
<dbReference type="BioCyc" id="EcoCyc:ENOLASE-MONOMER"/>
<dbReference type="BioCyc" id="MetaCyc:ENOLASE-MONOMER"/>
<dbReference type="BRENDA" id="4.2.1.11">
    <property type="organism ID" value="2026"/>
</dbReference>
<dbReference type="SABIO-RK" id="P0A6P9"/>
<dbReference type="UniPathway" id="UPA00109">
    <property type="reaction ID" value="UER00187"/>
</dbReference>
<dbReference type="EvolutionaryTrace" id="P0A6P9"/>
<dbReference type="PRO" id="PR:P0A6P9"/>
<dbReference type="Proteomes" id="UP000000625">
    <property type="component" value="Chromosome"/>
</dbReference>
<dbReference type="GO" id="GO:1990061">
    <property type="term" value="C:bacterial degradosome"/>
    <property type="evidence" value="ECO:0000353"/>
    <property type="project" value="ComplexPortal"/>
</dbReference>
<dbReference type="GO" id="GO:0009986">
    <property type="term" value="C:cell surface"/>
    <property type="evidence" value="ECO:0007669"/>
    <property type="project" value="UniProtKB-SubCell"/>
</dbReference>
<dbReference type="GO" id="GO:0005856">
    <property type="term" value="C:cytoskeleton"/>
    <property type="evidence" value="ECO:0000353"/>
    <property type="project" value="EcoCyc"/>
</dbReference>
<dbReference type="GO" id="GO:0005829">
    <property type="term" value="C:cytosol"/>
    <property type="evidence" value="ECO:0000314"/>
    <property type="project" value="EcoCyc"/>
</dbReference>
<dbReference type="GO" id="GO:0005576">
    <property type="term" value="C:extracellular region"/>
    <property type="evidence" value="ECO:0007669"/>
    <property type="project" value="UniProtKB-SubCell"/>
</dbReference>
<dbReference type="GO" id="GO:0016020">
    <property type="term" value="C:membrane"/>
    <property type="evidence" value="ECO:0000314"/>
    <property type="project" value="ComplexPortal"/>
</dbReference>
<dbReference type="GO" id="GO:0000015">
    <property type="term" value="C:phosphopyruvate hydratase complex"/>
    <property type="evidence" value="ECO:0000314"/>
    <property type="project" value="CAFA"/>
</dbReference>
<dbReference type="GO" id="GO:0042802">
    <property type="term" value="F:identical protein binding"/>
    <property type="evidence" value="ECO:0000353"/>
    <property type="project" value="IntAct"/>
</dbReference>
<dbReference type="GO" id="GO:0000287">
    <property type="term" value="F:magnesium ion binding"/>
    <property type="evidence" value="ECO:0000314"/>
    <property type="project" value="EcoliWiki"/>
</dbReference>
<dbReference type="GO" id="GO:0004634">
    <property type="term" value="F:phosphopyruvate hydratase activity"/>
    <property type="evidence" value="ECO:0000314"/>
    <property type="project" value="CAFA"/>
</dbReference>
<dbReference type="GO" id="GO:0042803">
    <property type="term" value="F:protein homodimerization activity"/>
    <property type="evidence" value="ECO:0000353"/>
    <property type="project" value="EcoCyc"/>
</dbReference>
<dbReference type="GO" id="GO:0006096">
    <property type="term" value="P:glycolytic process"/>
    <property type="evidence" value="ECO:0000315"/>
    <property type="project" value="EcoliWiki"/>
</dbReference>
<dbReference type="GO" id="GO:0006401">
    <property type="term" value="P:RNA catabolic process"/>
    <property type="evidence" value="ECO:0000303"/>
    <property type="project" value="ComplexPortal"/>
</dbReference>
<dbReference type="GO" id="GO:0006396">
    <property type="term" value="P:RNA processing"/>
    <property type="evidence" value="ECO:0000303"/>
    <property type="project" value="ComplexPortal"/>
</dbReference>
<dbReference type="CDD" id="cd03313">
    <property type="entry name" value="enolase"/>
    <property type="match status" value="1"/>
</dbReference>
<dbReference type="FunFam" id="3.20.20.120:FF:000001">
    <property type="entry name" value="Enolase"/>
    <property type="match status" value="1"/>
</dbReference>
<dbReference type="FunFam" id="3.30.390.10:FF:000001">
    <property type="entry name" value="Enolase"/>
    <property type="match status" value="1"/>
</dbReference>
<dbReference type="Gene3D" id="3.20.20.120">
    <property type="entry name" value="Enolase-like C-terminal domain"/>
    <property type="match status" value="1"/>
</dbReference>
<dbReference type="Gene3D" id="3.30.390.10">
    <property type="entry name" value="Enolase-like, N-terminal domain"/>
    <property type="match status" value="1"/>
</dbReference>
<dbReference type="HAMAP" id="MF_00318">
    <property type="entry name" value="Enolase"/>
    <property type="match status" value="1"/>
</dbReference>
<dbReference type="InterPro" id="IPR000941">
    <property type="entry name" value="Enolase"/>
</dbReference>
<dbReference type="InterPro" id="IPR036849">
    <property type="entry name" value="Enolase-like_C_sf"/>
</dbReference>
<dbReference type="InterPro" id="IPR029017">
    <property type="entry name" value="Enolase-like_N"/>
</dbReference>
<dbReference type="InterPro" id="IPR020810">
    <property type="entry name" value="Enolase_C"/>
</dbReference>
<dbReference type="InterPro" id="IPR020809">
    <property type="entry name" value="Enolase_CS"/>
</dbReference>
<dbReference type="InterPro" id="IPR020811">
    <property type="entry name" value="Enolase_N"/>
</dbReference>
<dbReference type="NCBIfam" id="TIGR01060">
    <property type="entry name" value="eno"/>
    <property type="match status" value="1"/>
</dbReference>
<dbReference type="PANTHER" id="PTHR11902">
    <property type="entry name" value="ENOLASE"/>
    <property type="match status" value="1"/>
</dbReference>
<dbReference type="PANTHER" id="PTHR11902:SF1">
    <property type="entry name" value="ENOLASE"/>
    <property type="match status" value="1"/>
</dbReference>
<dbReference type="Pfam" id="PF00113">
    <property type="entry name" value="Enolase_C"/>
    <property type="match status" value="1"/>
</dbReference>
<dbReference type="Pfam" id="PF03952">
    <property type="entry name" value="Enolase_N"/>
    <property type="match status" value="1"/>
</dbReference>
<dbReference type="PIRSF" id="PIRSF001400">
    <property type="entry name" value="Enolase"/>
    <property type="match status" value="1"/>
</dbReference>
<dbReference type="PRINTS" id="PR00148">
    <property type="entry name" value="ENOLASE"/>
</dbReference>
<dbReference type="SFLD" id="SFLDS00001">
    <property type="entry name" value="Enolase"/>
    <property type="match status" value="1"/>
</dbReference>
<dbReference type="SFLD" id="SFLDF00002">
    <property type="entry name" value="enolase"/>
    <property type="match status" value="1"/>
</dbReference>
<dbReference type="SMART" id="SM01192">
    <property type="entry name" value="Enolase_C"/>
    <property type="match status" value="1"/>
</dbReference>
<dbReference type="SMART" id="SM01193">
    <property type="entry name" value="Enolase_N"/>
    <property type="match status" value="1"/>
</dbReference>
<dbReference type="SUPFAM" id="SSF51604">
    <property type="entry name" value="Enolase C-terminal domain-like"/>
    <property type="match status" value="1"/>
</dbReference>
<dbReference type="SUPFAM" id="SSF54826">
    <property type="entry name" value="Enolase N-terminal domain-like"/>
    <property type="match status" value="1"/>
</dbReference>
<dbReference type="PROSITE" id="PS00164">
    <property type="entry name" value="ENOLASE"/>
    <property type="match status" value="1"/>
</dbReference>
<evidence type="ECO:0000255" key="1">
    <source>
        <dbReference type="HAMAP-Rule" id="MF_00318"/>
    </source>
</evidence>
<evidence type="ECO:0000269" key="2">
    <source>
    </source>
</evidence>
<evidence type="ECO:0000269" key="3">
    <source>
    </source>
</evidence>
<evidence type="ECO:0000269" key="4">
    <source>
    </source>
</evidence>
<evidence type="ECO:0000269" key="5">
    <source>
    </source>
</evidence>
<evidence type="ECO:0000269" key="6">
    <source>
    </source>
</evidence>
<evidence type="ECO:0000269" key="7">
    <source>
    </source>
</evidence>
<evidence type="ECO:0000269" key="8">
    <source>
    </source>
</evidence>
<evidence type="ECO:0000269" key="9">
    <source>
    </source>
</evidence>
<evidence type="ECO:0000269" key="10">
    <source>
    </source>
</evidence>
<evidence type="ECO:0000269" key="11">
    <source>
    </source>
</evidence>
<evidence type="ECO:0000269" key="12">
    <source>
    </source>
</evidence>
<evidence type="ECO:0000269" key="13">
    <source>
    </source>
</evidence>
<evidence type="ECO:0000269" key="14">
    <source>
    </source>
</evidence>
<evidence type="ECO:0000269" key="15">
    <source>
    </source>
</evidence>
<evidence type="ECO:0000269" key="16">
    <source>
    </source>
</evidence>
<evidence type="ECO:0000269" key="17">
    <source>
    </source>
</evidence>
<evidence type="ECO:0000269" key="18">
    <source>
    </source>
</evidence>
<evidence type="ECO:0000303" key="19">
    <source>
    </source>
</evidence>
<evidence type="ECO:0000303" key="20">
    <source>
    </source>
</evidence>
<evidence type="ECO:0000305" key="21"/>
<evidence type="ECO:0000305" key="22">
    <source>
    </source>
</evidence>
<evidence type="ECO:0000305" key="23">
    <source>
    </source>
</evidence>
<evidence type="ECO:0007744" key="24">
    <source>
        <dbReference type="PDB" id="1E9I"/>
    </source>
</evidence>
<evidence type="ECO:0007744" key="25">
    <source>
        <dbReference type="PDB" id="2FYM"/>
    </source>
</evidence>
<evidence type="ECO:0007744" key="26">
    <source>
        <dbReference type="PDB" id="3H8A"/>
    </source>
</evidence>
<evidence type="ECO:0007744" key="27">
    <source>
        <dbReference type="PDB" id="6BFY"/>
    </source>
</evidence>
<evidence type="ECO:0007744" key="28">
    <source>
        <dbReference type="PDB" id="6BFZ"/>
    </source>
</evidence>
<evidence type="ECO:0007829" key="29">
    <source>
        <dbReference type="PDB" id="2FYM"/>
    </source>
</evidence>
<evidence type="ECO:0007829" key="30">
    <source>
        <dbReference type="PDB" id="3H8A"/>
    </source>
</evidence>
<evidence type="ECO:0007829" key="31">
    <source>
        <dbReference type="PDB" id="6BFY"/>
    </source>
</evidence>
<evidence type="ECO:0007829" key="32">
    <source>
        <dbReference type="PDB" id="6NPF"/>
    </source>
</evidence>
<protein>
    <recommendedName>
        <fullName evidence="1 20">Enolase</fullName>
        <ecNumber evidence="1 11 14">4.2.1.11</ecNumber>
    </recommendedName>
    <alternativeName>
        <fullName evidence="1">2-phospho-D-glycerate hydro-lyase</fullName>
    </alternativeName>
    <alternativeName>
        <fullName evidence="1">2-phosphoglycerate dehydratase</fullName>
    </alternativeName>
</protein>
<organism>
    <name type="scientific">Escherichia coli (strain K12)</name>
    <dbReference type="NCBI Taxonomy" id="83333"/>
    <lineage>
        <taxon>Bacteria</taxon>
        <taxon>Pseudomonadati</taxon>
        <taxon>Pseudomonadota</taxon>
        <taxon>Gammaproteobacteria</taxon>
        <taxon>Enterobacterales</taxon>
        <taxon>Enterobacteriaceae</taxon>
        <taxon>Escherichia</taxon>
    </lineage>
</organism>
<reference key="1">
    <citation type="journal article" date="1996" name="DNA Seq.">
        <title>Cloning, nucleotide sequence, and functional expression of the Escherichia coli enolase (eno) gene in a temperature-sensitive eno mutant strain.</title>
        <authorList>
            <person name="Klein M."/>
            <person name="Sprenger G.A."/>
            <person name="Freudl R."/>
        </authorList>
    </citation>
    <scope>NUCLEOTIDE SEQUENCE [GENOMIC DNA]</scope>
    <source>
        <strain>K12 / JM109 / ATCC 53323</strain>
    </source>
</reference>
<reference key="2">
    <citation type="journal article" date="1997" name="Science">
        <title>The complete genome sequence of Escherichia coli K-12.</title>
        <authorList>
            <person name="Blattner F.R."/>
            <person name="Plunkett G. III"/>
            <person name="Bloch C.A."/>
            <person name="Perna N.T."/>
            <person name="Burland V."/>
            <person name="Riley M."/>
            <person name="Collado-Vides J."/>
            <person name="Glasner J.D."/>
            <person name="Rode C.K."/>
            <person name="Mayhew G.F."/>
            <person name="Gregor J."/>
            <person name="Davis N.W."/>
            <person name="Kirkpatrick H.A."/>
            <person name="Goeden M.A."/>
            <person name="Rose D.J."/>
            <person name="Mau B."/>
            <person name="Shao Y."/>
        </authorList>
    </citation>
    <scope>NUCLEOTIDE SEQUENCE [LARGE SCALE GENOMIC DNA]</scope>
    <source>
        <strain>K12 / MG1655 / ATCC 47076</strain>
    </source>
</reference>
<reference key="3">
    <citation type="journal article" date="2006" name="Mol. Syst. Biol.">
        <title>Highly accurate genome sequences of Escherichia coli K-12 strains MG1655 and W3110.</title>
        <authorList>
            <person name="Hayashi K."/>
            <person name="Morooka N."/>
            <person name="Yamamoto Y."/>
            <person name="Fujita K."/>
            <person name="Isono K."/>
            <person name="Choi S."/>
            <person name="Ohtsubo E."/>
            <person name="Baba T."/>
            <person name="Wanner B.L."/>
            <person name="Mori H."/>
            <person name="Horiuchi T."/>
        </authorList>
    </citation>
    <scope>NUCLEOTIDE SEQUENCE [LARGE SCALE GENOMIC DNA]</scope>
    <source>
        <strain>K12 / W3110 / ATCC 27325 / DSM 5911</strain>
    </source>
</reference>
<reference key="4">
    <citation type="journal article" date="1986" name="J. Biol. Chem.">
        <title>Nucleotide sequence of Escherichia coli pyrG encoding CTP synthetase.</title>
        <authorList>
            <person name="Weng M."/>
            <person name="Makaroff C.A."/>
            <person name="Zalkin H."/>
        </authorList>
    </citation>
    <scope>NUCLEOTIDE SEQUENCE [GENOMIC DNA] OF 1-123</scope>
</reference>
<reference key="5">
    <citation type="journal article" date="1996" name="Nature">
        <title>A DEAD-box RNA helicase in the Escherichia coli RNA degradosome.</title>
        <authorList>
            <person name="Py B."/>
            <person name="Higgins C.F."/>
            <person name="Krisch H.M."/>
            <person name="Carpousis A.J."/>
        </authorList>
    </citation>
    <scope>PROTEIN SEQUENCE OF 2-16</scope>
    <scope>SUBUNIT</scope>
    <scope>PART OF RNA DEGRADOSOME</scope>
</reference>
<reference key="6">
    <citation type="journal article" date="1997" name="Electrophoresis">
        <title>Comparing the predicted and observed properties of proteins encoded in the genome of Escherichia coli K-12.</title>
        <authorList>
            <person name="Link A.J."/>
            <person name="Robison K."/>
            <person name="Church G.M."/>
        </authorList>
    </citation>
    <scope>PROTEIN SEQUENCE OF 2-13</scope>
    <source>
        <strain>K12 / EMG2</strain>
    </source>
</reference>
<reference key="7">
    <citation type="journal article" date="1998" name="J. Mol. Biol.">
        <title>Protein identification with N and C-terminal sequence tags in proteome projects.</title>
        <authorList>
            <person name="Wilkins M.R."/>
            <person name="Gasteiger E."/>
            <person name="Tonella L."/>
            <person name="Ou K."/>
            <person name="Tyler M."/>
            <person name="Sanchez J.-C."/>
            <person name="Gooley A.A."/>
            <person name="Walsh B.J."/>
            <person name="Bairoch A."/>
            <person name="Appel R.D."/>
            <person name="Williams K.L."/>
            <person name="Hochstrasser D.F."/>
        </authorList>
    </citation>
    <scope>PROTEIN SEQUENCE OF 2-5</scope>
    <source>
        <strain>K12 / W3110 / ATCC 27325 / DSM 5911</strain>
    </source>
</reference>
<reference key="8">
    <citation type="journal article" date="1971" name="J. Biol. Chem.">
        <title>The purification and characterization of Escherichia coli enolase.</title>
        <authorList>
            <person name="Spring T.G."/>
            <person name="Wold F."/>
        </authorList>
    </citation>
    <scope>FUNCTION</scope>
    <scope>CATALYTIC ACTIVITY</scope>
    <scope>COFACTOR</scope>
    <scope>ACTIVITY REGULATION</scope>
    <scope>BIOPHYSICOCHEMICAL PROPERTIES</scope>
    <scope>SUBUNIT</scope>
    <scope>SUBCELLULAR LOCATION</scope>
    <source>
        <strain>B</strain>
    </source>
</reference>
<reference key="9">
    <citation type="journal article" date="1989" name="Biochimie">
        <title>Phosphorylation of Escherichia coli enolase.</title>
        <authorList>
            <person name="Dannelly H.K."/>
            <person name="Duclos B."/>
            <person name="Cozzone A.J."/>
            <person name="Reeves H.C."/>
        </authorList>
    </citation>
    <scope>FUNCTION</scope>
    <scope>CATALYTIC ACTIVITY</scope>
    <scope>ACTIVITY REGULATION</scope>
    <scope>PHOSPHORYLATION</scope>
    <source>
        <strain>K12 / JA200</strain>
    </source>
</reference>
<reference key="10">
    <citation type="journal article" date="1997" name="Electrophoresis">
        <title>Escherichia coli proteome analysis using the gene-protein database.</title>
        <authorList>
            <person name="VanBogelen R.A."/>
            <person name="Abshire K.Z."/>
            <person name="Moldover B."/>
            <person name="Olson E.R."/>
            <person name="Neidhardt F.C."/>
        </authorList>
    </citation>
    <scope>IDENTIFICATION BY 2D-GEL</scope>
</reference>
<reference key="11">
    <citation type="journal article" date="1998" name="Genes Dev.">
        <title>Ribonuclease E organizes the protein interactions in the Escherichia coli RNA degradosome.</title>
        <authorList>
            <person name="Vanzo N.F."/>
            <person name="Li Y.S."/>
            <person name="Py B."/>
            <person name="Blum E."/>
            <person name="Higgins C.F."/>
            <person name="Raynal L.C."/>
            <person name="Krisch H.M."/>
            <person name="Carpousis A.J."/>
        </authorList>
    </citation>
    <scope>INTERACTION WITH RNASE E</scope>
</reference>
<reference key="12">
    <citation type="journal article" date="2004" name="J. Mol. Biol.">
        <title>Is 2-phosphoglycerate-dependent automodification of bacterial enolases implicated in their export?</title>
        <authorList>
            <person name="Boeel G."/>
            <person name="Pichereau V."/>
            <person name="Mijakovic I."/>
            <person name="Maze A."/>
            <person name="Poncet S."/>
            <person name="Gillet S."/>
            <person name="Giard J.-C."/>
            <person name="Hartke A."/>
            <person name="Auffray Y."/>
            <person name="Deutscher J."/>
        </authorList>
    </citation>
    <scope>PROTEIN SEQUENCE OF 333-351</scope>
    <scope>SUBSTRATE BINDING AT LYS-342</scope>
    <scope>ACTIVE SITE</scope>
    <scope>ACTIVITY REGULATION</scope>
    <scope>SECRETION OF SUBSTRATE-BOUND ENOLASE</scope>
    <scope>SUBCELLULAR LOCATION</scope>
    <scope>MUTAGENESIS OF GLU-168; GLU-209 AND LYS-342</scope>
    <source>
        <strain>NM522</strain>
    </source>
</reference>
<reference key="13">
    <citation type="journal article" date="2004" name="Proc. Natl. Acad. Sci. U.S.A.">
        <title>Global analysis of Escherichia coli RNA degradosome function using DNA microarrays.</title>
        <authorList>
            <person name="Bernstein J.A."/>
            <person name="Lin P.-H."/>
            <person name="Cohen S.N."/>
            <person name="Lin-Chao S."/>
        </authorList>
    </citation>
    <scope>FUNCTION IN MRNA TURNOVER</scope>
    <scope>PART OF RNA DEGRADOSOME</scope>
</reference>
<reference key="14">
    <citation type="journal article" date="2004" name="Mol. Microbiol.">
        <title>Enolase in the RNA degradosome plays a crucial role in the rapid decay of glucose transporter mRNA in the response to phosphosugar stress in Escherichia coli.</title>
        <authorList>
            <person name="Morita T."/>
            <person name="Kawamoto H."/>
            <person name="Mizota T."/>
            <person name="Inada T."/>
            <person name="Aiba H."/>
        </authorList>
    </citation>
    <scope>FUNCTION IN THE DECAY OF GLUCOSE TRANSPORTER MRNA</scope>
    <scope>PART OF RNA DEGRADOSOME</scope>
    <source>
        <strain>K12 / W3110 / ATCC 27325 / DSM 5911</strain>
    </source>
</reference>
<reference key="15">
    <citation type="journal article" date="2007" name="Proc. Natl. Acad. Sci. U.S.A.">
        <title>RNaseE and the other constituents of the RNA degradosome are components of the bacterial cytoskeleton.</title>
        <authorList>
            <person name="Taghbalout A."/>
            <person name="Rothfield L."/>
        </authorList>
    </citation>
    <scope>PART OF RNA DEGRADOSOME</scope>
    <scope>SUBCELLULAR LOCATION</scope>
    <source>
        <strain>PB103</strain>
    </source>
</reference>
<reference key="16">
    <citation type="journal article" date="2008" name="J. Biol. Chem.">
        <title>RNaseE and RNA helicase B play central roles in the cytoskeletal organization of the RNA degradosome.</title>
        <authorList>
            <person name="Taghbalout A."/>
            <person name="Rothfield L."/>
        </authorList>
    </citation>
    <scope>INTERACTION WITH RNASE E</scope>
    <scope>PART OF RNA DEGRADOSOME</scope>
    <scope>SUBCELLULAR LOCATION</scope>
</reference>
<reference key="17">
    <citation type="journal article" date="2009" name="Mol. Cell. Proteomics">
        <title>Lysine acetylation is a highly abundant and evolutionarily conserved modification in Escherichia coli.</title>
        <authorList>
            <person name="Zhang J."/>
            <person name="Sprung R."/>
            <person name="Pei J."/>
            <person name="Tan X."/>
            <person name="Kim S."/>
            <person name="Zhu H."/>
            <person name="Liu C.F."/>
            <person name="Grishin N.V."/>
            <person name="Zhao Y."/>
        </authorList>
    </citation>
    <scope>ACETYLATION [LARGE SCALE ANALYSIS] AT LYS-257</scope>
    <scope>IDENTIFICATION BY MASS SPECTROMETRY</scope>
    <source>
        <strain>K12 / JW1106</strain>
        <strain>K12 / MG1655 / ATCC 47076</strain>
    </source>
</reference>
<reference key="18">
    <citation type="journal article" date="2019" name="Sci. Adv.">
        <title>Protein lysine de-2-hydroxyisobutyrylation by CobB in prokaryotes.</title>
        <authorList>
            <person name="Dong H."/>
            <person name="Zhai G."/>
            <person name="Chen C."/>
            <person name="Bai X."/>
            <person name="Tian S."/>
            <person name="Hu D."/>
            <person name="Fan E."/>
            <person name="Zhang K."/>
        </authorList>
    </citation>
    <scope>HYDROXYBUTYRYLATION AT LYS-342</scope>
    <source>
        <strain>K12 / MG1655 / ATCC 47076</strain>
    </source>
</reference>
<reference evidence="24" key="19">
    <citation type="journal article" date="2001" name="J. Mol. Biol.">
        <title>Crystal structure of the Escherichia coli RNA degradosome component enolase.</title>
        <authorList>
            <person name="Kuhnel K."/>
            <person name="Luisi B.F."/>
        </authorList>
    </citation>
    <scope>X-RAY CRYSTALLOGRAPHY (2.48 ANGSTROMS) IN COMPLEX WITH MG(2+)</scope>
    <scope>COFACTOR</scope>
    <scope>SUBUNIT</scope>
</reference>
<reference evidence="25" key="20">
    <citation type="journal article" date="2006" name="J. Mol. Biol.">
        <title>Recognition of enolase in the Escherichia coli RNA degradosome.</title>
        <authorList>
            <person name="Chandran V."/>
            <person name="Luisi B.F."/>
        </authorList>
    </citation>
    <scope>X-RAY CRYSTALLOGRAPHY (1.6 ANGSTROMS) IN COMPLEX WITH THE MINIMAL BINDING SEGMENT OF RNASE E AND MG(2+)</scope>
    <scope>COFACTOR</scope>
    <scope>SUBUNIT</scope>
</reference>
<reference evidence="26" key="21">
    <citation type="journal article" date="2010" name="Acta Crystallogr. D">
        <title>Molecular recognition between Escherichia coli enolase and ribonuclease E.</title>
        <authorList>
            <person name="Nurmohamed S."/>
            <person name="McKay A.R."/>
            <person name="Robinson C.V."/>
            <person name="Luisi B.F."/>
        </authorList>
    </citation>
    <scope>X-RAY CRYSTALLOGRAPHY (1.9 ANGSTROMS) IN COMPLEX WITH THE MINIMAL BINDING SEGMENT OF RNASE E AND MG(2+)</scope>
    <scope>COFACTOR</scope>
    <scope>SUBUNIT</scope>
    <scope>IDENTIFICATION BY MASS SPECTROMETRY</scope>
</reference>
<reference evidence="27 28" key="22">
    <citation type="journal article" date="2019" name="Biochemistry">
        <title>Structural and Functional Studies of Bacterial Enolase, a Potential Target against Gram-Negative Pathogens.</title>
        <authorList>
            <person name="Krucinska J."/>
            <person name="Falcone E."/>
            <person name="Erlandsen H."/>
            <person name="Hazeen A."/>
            <person name="Lombardo M.N."/>
            <person name="Estrada A."/>
            <person name="Robinson V.L."/>
            <person name="Anderson A.C."/>
            <person name="Wright D.L."/>
        </authorList>
    </citation>
    <scope>X-RAY CRYSTALLOGRAPHY (1.81 ANGSTROMS) IN COMPLEX WITH 2-PHOSPHOGLYCERIC ACID; MG(2+) AND PHOSPHOENOLPYRUVATE</scope>
    <scope>FUNCTION</scope>
    <scope>CATALYTIC ACTIVITY</scope>
    <scope>COFACTOR</scope>
    <scope>ACTIVITY REGULATION</scope>
    <scope>SUBUNIT</scope>
    <scope>PROBABLE TARGET OF TROPOLONE ANTIBIOTICS</scope>
    <scope>BIOTECHNOLOGY</scope>
    <source>
        <strain>ATCC 25922</strain>
    </source>
</reference>
<feature type="initiator methionine" description="Removed" evidence="15 16 17">
    <location>
        <position position="1"/>
    </location>
</feature>
<feature type="chain" id="PRO_0000133882" description="Enolase">
    <location>
        <begin position="2"/>
        <end position="432"/>
    </location>
</feature>
<feature type="region of interest" description="Interaction with RNase E">
    <location>
        <begin position="5"/>
        <end position="34"/>
    </location>
</feature>
<feature type="active site" description="Proton donor" evidence="1 4">
    <location>
        <position position="209"/>
    </location>
</feature>
<feature type="active site" description="Proton acceptor" evidence="1 4">
    <location>
        <position position="342"/>
    </location>
</feature>
<feature type="binding site" evidence="27 28">
    <location>
        <position position="41"/>
    </location>
    <ligand>
        <name>(2R)-2-phosphoglycerate</name>
        <dbReference type="ChEBI" id="CHEBI:58289"/>
    </ligand>
</feature>
<feature type="binding site" evidence="28">
    <location>
        <position position="41"/>
    </location>
    <ligand>
        <name>phosphoenolpyruvate</name>
        <dbReference type="ChEBI" id="CHEBI:58702"/>
    </ligand>
</feature>
<feature type="binding site" evidence="12 27">
    <location>
        <position position="42"/>
    </location>
    <ligand>
        <name>Mg(2+)</name>
        <dbReference type="ChEBI" id="CHEBI:18420"/>
        <label>2</label>
    </ligand>
</feature>
<feature type="binding site" evidence="27">
    <location>
        <position position="159"/>
    </location>
    <ligand>
        <name>(2R)-2-phosphoglycerate</name>
        <dbReference type="ChEBI" id="CHEBI:58289"/>
    </ligand>
</feature>
<feature type="binding site" evidence="1 27 28">
    <location>
        <position position="167"/>
    </location>
    <ligand>
        <name>(2R)-2-phosphoglycerate</name>
        <dbReference type="ChEBI" id="CHEBI:58289"/>
    </ligand>
</feature>
<feature type="binding site" evidence="28">
    <location>
        <position position="167"/>
    </location>
    <ligand>
        <name>phosphoenolpyruvate</name>
        <dbReference type="ChEBI" id="CHEBI:58702"/>
    </ligand>
</feature>
<feature type="binding site" evidence="27 28">
    <location>
        <position position="168"/>
    </location>
    <ligand>
        <name>(2R)-2-phosphoglycerate</name>
        <dbReference type="ChEBI" id="CHEBI:58289"/>
    </ligand>
</feature>
<feature type="binding site" evidence="27">
    <location>
        <position position="209"/>
    </location>
    <ligand>
        <name>(2R)-2-phosphoglycerate</name>
        <dbReference type="ChEBI" id="CHEBI:58289"/>
    </ligand>
</feature>
<feature type="binding site" evidence="1 2 6 10 24 25 26 27 28">
    <location>
        <position position="246"/>
    </location>
    <ligand>
        <name>Mg(2+)</name>
        <dbReference type="ChEBI" id="CHEBI:18420"/>
        <label>1</label>
    </ligand>
</feature>
<feature type="binding site" evidence="1 2 10 12 24 25 26 27 28">
    <location>
        <position position="290"/>
    </location>
    <ligand>
        <name>Mg(2+)</name>
        <dbReference type="ChEBI" id="CHEBI:18420"/>
        <label>1</label>
    </ligand>
</feature>
<feature type="binding site" evidence="1 2 6 10 24 25 27 28">
    <location>
        <position position="317"/>
    </location>
    <ligand>
        <name>Mg(2+)</name>
        <dbReference type="ChEBI" id="CHEBI:18420"/>
        <label>1</label>
    </ligand>
</feature>
<feature type="binding site" evidence="1 27 28">
    <location>
        <position position="342"/>
    </location>
    <ligand>
        <name>(2R)-2-phosphoglycerate</name>
        <dbReference type="ChEBI" id="CHEBI:58289"/>
    </ligand>
</feature>
<feature type="binding site" evidence="28">
    <location>
        <position position="342"/>
    </location>
    <ligand>
        <name>phosphoenolpyruvate</name>
        <dbReference type="ChEBI" id="CHEBI:58702"/>
    </ligand>
</feature>
<feature type="binding site" evidence="1 27 28">
    <location>
        <position position="371"/>
    </location>
    <ligand>
        <name>(2R)-2-phosphoglycerate</name>
        <dbReference type="ChEBI" id="CHEBI:58289"/>
    </ligand>
</feature>
<feature type="binding site" evidence="28">
    <location>
        <position position="371"/>
    </location>
    <ligand>
        <name>phosphoenolpyruvate</name>
        <dbReference type="ChEBI" id="CHEBI:58702"/>
    </ligand>
</feature>
<feature type="binding site" evidence="1 27 28">
    <location>
        <position position="372"/>
    </location>
    <ligand>
        <name>(2R)-2-phosphoglycerate</name>
        <dbReference type="ChEBI" id="CHEBI:58289"/>
    </ligand>
</feature>
<feature type="binding site" evidence="28">
    <location>
        <position position="372"/>
    </location>
    <ligand>
        <name>phosphoenolpyruvate</name>
        <dbReference type="ChEBI" id="CHEBI:58702"/>
    </ligand>
</feature>
<feature type="binding site" evidence="1 27 28">
    <location>
        <position position="393"/>
    </location>
    <ligand>
        <name>(2R)-2-phosphoglycerate</name>
        <dbReference type="ChEBI" id="CHEBI:58289"/>
    </ligand>
</feature>
<feature type="site" description="Interaction with RNase E" evidence="6 10">
    <location>
        <position position="120"/>
    </location>
</feature>
<feature type="site" description="Interaction with RNase E" evidence="6 10">
    <location>
        <position position="376"/>
    </location>
</feature>
<feature type="site" description="Interaction with RNase E" evidence="6 10">
    <location>
        <position position="408"/>
    </location>
</feature>
<feature type="modified residue" description="N6-acetyllysine" evidence="9">
    <location>
        <position position="257"/>
    </location>
</feature>
<feature type="modified residue" description="N6-(2-hydroxyisobutyryl)lysine" evidence="13">
    <location>
        <position position="342"/>
    </location>
</feature>
<feature type="mutagenesis site" description="5% activity; not secreted." evidence="4">
    <original>E</original>
    <variation>Q</variation>
    <location>
        <position position="168"/>
    </location>
</feature>
<feature type="mutagenesis site" description="1% activity; not secreted." evidence="4">
    <original>E</original>
    <variation>Q</variation>
    <location>
        <position position="209"/>
    </location>
</feature>
<feature type="mutagenesis site" description="1% activity; not secreted." evidence="4">
    <original>K</original>
    <variation>A</variation>
    <variation>Q</variation>
    <variation>R</variation>
    <location>
        <position position="342"/>
    </location>
</feature>
<feature type="mutagenesis site" description="94% activity; not secreted." evidence="4">
    <original>K</original>
    <variation>E</variation>
    <location>
        <position position="342"/>
    </location>
</feature>
<feature type="sequence conflict" description="In Ref. 1; CAA57795/AAA24486." evidence="21" ref="1">
    <original>N</original>
    <variation>K</variation>
    <location>
        <position position="102"/>
    </location>
</feature>
<feature type="sequence conflict" description="In Ref. 1; CAA57795." evidence="21" ref="1">
    <original>A</original>
    <variation>D</variation>
    <location>
        <position position="220"/>
    </location>
</feature>
<feature type="sequence conflict" description="In Ref. 1; CAA57795." evidence="21" ref="1">
    <original>I</original>
    <variation>Y</variation>
    <location>
        <position position="339"/>
    </location>
</feature>
<feature type="sequence conflict" description="In Ref. 1; CAA57795." evidence="21" ref="1">
    <original>PYNGRKEIKGQA</original>
    <variation>RTTVVKRSKARHKTDFI</variation>
    <location>
        <begin position="421"/>
        <end position="432"/>
    </location>
</feature>
<feature type="strand" evidence="29">
    <location>
        <begin position="3"/>
        <end position="13"/>
    </location>
</feature>
<feature type="strand" evidence="29">
    <location>
        <begin position="19"/>
        <end position="27"/>
    </location>
</feature>
<feature type="strand" evidence="29">
    <location>
        <begin position="32"/>
        <end position="36"/>
    </location>
</feature>
<feature type="strand" evidence="29">
    <location>
        <begin position="45"/>
        <end position="47"/>
    </location>
</feature>
<feature type="turn" evidence="32">
    <location>
        <begin position="56"/>
        <end position="58"/>
    </location>
</feature>
<feature type="helix" evidence="29">
    <location>
        <begin position="59"/>
        <end position="61"/>
    </location>
</feature>
<feature type="helix" evidence="29">
    <location>
        <begin position="65"/>
        <end position="72"/>
    </location>
</feature>
<feature type="helix" evidence="29">
    <location>
        <begin position="74"/>
        <end position="79"/>
    </location>
</feature>
<feature type="helix" evidence="29">
    <location>
        <begin position="87"/>
        <end position="98"/>
    </location>
</feature>
<feature type="strand" evidence="30">
    <location>
        <begin position="100"/>
        <end position="103"/>
    </location>
</feature>
<feature type="turn" evidence="29">
    <location>
        <begin position="104"/>
        <end position="106"/>
    </location>
</feature>
<feature type="helix" evidence="29">
    <location>
        <begin position="108"/>
        <end position="125"/>
    </location>
</feature>
<feature type="helix" evidence="29">
    <location>
        <begin position="130"/>
        <end position="137"/>
    </location>
</feature>
<feature type="strand" evidence="29">
    <location>
        <begin position="151"/>
        <end position="155"/>
    </location>
</feature>
<feature type="helix" evidence="29">
    <location>
        <begin position="157"/>
        <end position="159"/>
    </location>
</feature>
<feature type="strand" evidence="29">
    <location>
        <begin position="160"/>
        <end position="163"/>
    </location>
</feature>
<feature type="strand" evidence="29">
    <location>
        <begin position="166"/>
        <end position="172"/>
    </location>
</feature>
<feature type="helix" evidence="29">
    <location>
        <begin position="179"/>
        <end position="199"/>
    </location>
</feature>
<feature type="strand" evidence="31">
    <location>
        <begin position="210"/>
        <end position="212"/>
    </location>
</feature>
<feature type="helix" evidence="29">
    <location>
        <begin position="219"/>
        <end position="232"/>
    </location>
</feature>
<feature type="turn" evidence="29">
    <location>
        <begin position="238"/>
        <end position="240"/>
    </location>
</feature>
<feature type="strand" evidence="29">
    <location>
        <begin position="241"/>
        <end position="246"/>
    </location>
</feature>
<feature type="helix" evidence="29">
    <location>
        <begin position="249"/>
        <end position="252"/>
    </location>
</feature>
<feature type="strand" evidence="29">
    <location>
        <begin position="257"/>
        <end position="259"/>
    </location>
</feature>
<feature type="helix" evidence="29">
    <location>
        <begin position="261"/>
        <end position="263"/>
    </location>
</feature>
<feature type="strand" evidence="31">
    <location>
        <begin position="266"/>
        <end position="268"/>
    </location>
</feature>
<feature type="helix" evidence="29">
    <location>
        <begin position="270"/>
        <end position="283"/>
    </location>
</feature>
<feature type="strand" evidence="29">
    <location>
        <begin position="286"/>
        <end position="291"/>
    </location>
</feature>
<feature type="helix" evidence="29">
    <location>
        <begin position="298"/>
        <end position="308"/>
    </location>
</feature>
<feature type="turn" evidence="29">
    <location>
        <begin position="309"/>
        <end position="311"/>
    </location>
</feature>
<feature type="strand" evidence="29">
    <location>
        <begin position="312"/>
        <end position="317"/>
    </location>
</feature>
<feature type="turn" evidence="29">
    <location>
        <begin position="318"/>
        <end position="322"/>
    </location>
</feature>
<feature type="helix" evidence="29">
    <location>
        <begin position="324"/>
        <end position="332"/>
    </location>
</feature>
<feature type="strand" evidence="29">
    <location>
        <begin position="337"/>
        <end position="341"/>
    </location>
</feature>
<feature type="helix" evidence="29">
    <location>
        <begin position="343"/>
        <end position="345"/>
    </location>
</feature>
<feature type="helix" evidence="29">
    <location>
        <begin position="349"/>
        <end position="361"/>
    </location>
</feature>
<feature type="strand" evidence="29">
    <location>
        <begin position="365"/>
        <end position="369"/>
    </location>
</feature>
<feature type="helix" evidence="29">
    <location>
        <begin position="379"/>
        <end position="386"/>
    </location>
</feature>
<feature type="strand" evidence="29">
    <location>
        <begin position="390"/>
        <end position="393"/>
    </location>
</feature>
<feature type="helix" evidence="29">
    <location>
        <begin position="400"/>
        <end position="416"/>
    </location>
</feature>
<feature type="helix" evidence="29">
    <location>
        <begin position="417"/>
        <end position="419"/>
    </location>
</feature>
<feature type="helix" evidence="29">
    <location>
        <begin position="424"/>
        <end position="427"/>
    </location>
</feature>